<proteinExistence type="inferred from homology"/>
<evidence type="ECO:0000255" key="1">
    <source>
        <dbReference type="HAMAP-Rule" id="MF_00146"/>
    </source>
</evidence>
<sequence>MAVMPDKWIREKAENFGMIEPFVNHKSSKGVISFGLSSYGYDARVDNKFKIFTNVNSAIVDPKNFSENSFIDKETDVCIIPPNSFVLASTVEYFRIPRNVLVICVGKSTYARCGIIVNVTPLEPGWEGHVTLEFSNTTPLPAKIYANEGACQFVFLSGESECEKSYDDMKGKYMNQHGITLPLVK</sequence>
<accession>C0R2R5</accession>
<dbReference type="EC" id="3.5.4.13" evidence="1"/>
<dbReference type="EMBL" id="CP001391">
    <property type="protein sequence ID" value="ACN95207.1"/>
    <property type="molecule type" value="Genomic_DNA"/>
</dbReference>
<dbReference type="RefSeq" id="WP_006280485.1">
    <property type="nucleotide sequence ID" value="NZ_MKIF01000184.1"/>
</dbReference>
<dbReference type="SMR" id="C0R2R5"/>
<dbReference type="STRING" id="66084.WRi_004100"/>
<dbReference type="GeneID" id="70035873"/>
<dbReference type="KEGG" id="wri:WRi_004100"/>
<dbReference type="HOGENOM" id="CLU_087476_4_0_5"/>
<dbReference type="UniPathway" id="UPA00610">
    <property type="reaction ID" value="UER00665"/>
</dbReference>
<dbReference type="Proteomes" id="UP000001293">
    <property type="component" value="Chromosome"/>
</dbReference>
<dbReference type="GO" id="GO:0008829">
    <property type="term" value="F:dCTP deaminase activity"/>
    <property type="evidence" value="ECO:0007669"/>
    <property type="project" value="UniProtKB-UniRule"/>
</dbReference>
<dbReference type="GO" id="GO:0000166">
    <property type="term" value="F:nucleotide binding"/>
    <property type="evidence" value="ECO:0007669"/>
    <property type="project" value="UniProtKB-KW"/>
</dbReference>
<dbReference type="GO" id="GO:0006226">
    <property type="term" value="P:dUMP biosynthetic process"/>
    <property type="evidence" value="ECO:0007669"/>
    <property type="project" value="UniProtKB-UniPathway"/>
</dbReference>
<dbReference type="GO" id="GO:0006229">
    <property type="term" value="P:dUTP biosynthetic process"/>
    <property type="evidence" value="ECO:0007669"/>
    <property type="project" value="UniProtKB-UniRule"/>
</dbReference>
<dbReference type="CDD" id="cd07557">
    <property type="entry name" value="trimeric_dUTPase"/>
    <property type="match status" value="1"/>
</dbReference>
<dbReference type="FunFam" id="2.70.40.10:FF:000001">
    <property type="entry name" value="dCTP deaminase"/>
    <property type="match status" value="1"/>
</dbReference>
<dbReference type="Gene3D" id="2.70.40.10">
    <property type="match status" value="1"/>
</dbReference>
<dbReference type="HAMAP" id="MF_00146">
    <property type="entry name" value="dCTP_deaminase"/>
    <property type="match status" value="1"/>
</dbReference>
<dbReference type="InterPro" id="IPR011962">
    <property type="entry name" value="dCTP_deaminase"/>
</dbReference>
<dbReference type="InterPro" id="IPR036157">
    <property type="entry name" value="dUTPase-like_sf"/>
</dbReference>
<dbReference type="InterPro" id="IPR033704">
    <property type="entry name" value="dUTPase_trimeric"/>
</dbReference>
<dbReference type="NCBIfam" id="TIGR02274">
    <property type="entry name" value="dCTP_deam"/>
    <property type="match status" value="1"/>
</dbReference>
<dbReference type="PANTHER" id="PTHR42680">
    <property type="entry name" value="DCTP DEAMINASE"/>
    <property type="match status" value="1"/>
</dbReference>
<dbReference type="PANTHER" id="PTHR42680:SF3">
    <property type="entry name" value="DCTP DEAMINASE"/>
    <property type="match status" value="1"/>
</dbReference>
<dbReference type="Pfam" id="PF22769">
    <property type="entry name" value="DCD"/>
    <property type="match status" value="1"/>
</dbReference>
<dbReference type="SUPFAM" id="SSF51283">
    <property type="entry name" value="dUTPase-like"/>
    <property type="match status" value="1"/>
</dbReference>
<feature type="chain" id="PRO_1000123161" description="dCTP deaminase">
    <location>
        <begin position="1"/>
        <end position="185"/>
    </location>
</feature>
<feature type="active site" description="Proton donor/acceptor" evidence="1">
    <location>
        <position position="133"/>
    </location>
</feature>
<feature type="binding site" evidence="1">
    <location>
        <begin position="107"/>
        <end position="112"/>
    </location>
    <ligand>
        <name>dCTP</name>
        <dbReference type="ChEBI" id="CHEBI:61481"/>
    </ligand>
</feature>
<feature type="binding site" evidence="1">
    <location>
        <begin position="131"/>
        <end position="133"/>
    </location>
    <ligand>
        <name>dCTP</name>
        <dbReference type="ChEBI" id="CHEBI:61481"/>
    </ligand>
</feature>
<feature type="binding site" evidence="1">
    <location>
        <position position="152"/>
    </location>
    <ligand>
        <name>dCTP</name>
        <dbReference type="ChEBI" id="CHEBI:61481"/>
    </ligand>
</feature>
<feature type="binding site" evidence="1">
    <location>
        <position position="166"/>
    </location>
    <ligand>
        <name>dCTP</name>
        <dbReference type="ChEBI" id="CHEBI:61481"/>
    </ligand>
</feature>
<feature type="binding site" evidence="1">
    <location>
        <position position="176"/>
    </location>
    <ligand>
        <name>dCTP</name>
        <dbReference type="ChEBI" id="CHEBI:61481"/>
    </ligand>
</feature>
<comment type="function">
    <text evidence="1">Catalyzes the deamination of dCTP to dUTP.</text>
</comment>
<comment type="catalytic activity">
    <reaction evidence="1">
        <text>dCTP + H2O + H(+) = dUTP + NH4(+)</text>
        <dbReference type="Rhea" id="RHEA:22680"/>
        <dbReference type="ChEBI" id="CHEBI:15377"/>
        <dbReference type="ChEBI" id="CHEBI:15378"/>
        <dbReference type="ChEBI" id="CHEBI:28938"/>
        <dbReference type="ChEBI" id="CHEBI:61481"/>
        <dbReference type="ChEBI" id="CHEBI:61555"/>
        <dbReference type="EC" id="3.5.4.13"/>
    </reaction>
</comment>
<comment type="pathway">
    <text evidence="1">Pyrimidine metabolism; dUMP biosynthesis; dUMP from dCTP (dUTP route): step 1/2.</text>
</comment>
<comment type="subunit">
    <text evidence="1">Homotrimer.</text>
</comment>
<comment type="similarity">
    <text evidence="1">Belongs to the dCTP deaminase family.</text>
</comment>
<keyword id="KW-0378">Hydrolase</keyword>
<keyword id="KW-0546">Nucleotide metabolism</keyword>
<keyword id="KW-0547">Nucleotide-binding</keyword>
<reference key="1">
    <citation type="journal article" date="2009" name="Proc. Natl. Acad. Sci. U.S.A.">
        <title>The mosaic genome structure of the Wolbachia wRi strain infecting Drosophila simulans.</title>
        <authorList>
            <person name="Klasson L."/>
            <person name="Westberg J."/>
            <person name="Sapountzis P."/>
            <person name="Naeslund K."/>
            <person name="Lutnaes Y."/>
            <person name="Darby A.C."/>
            <person name="Veneti Z."/>
            <person name="Chen L."/>
            <person name="Braig H.R."/>
            <person name="Garrett R."/>
            <person name="Bourtzis K."/>
            <person name="Andersson S.G."/>
        </authorList>
    </citation>
    <scope>NUCLEOTIDE SEQUENCE [LARGE SCALE GENOMIC DNA]</scope>
    <source>
        <strain>wRi</strain>
    </source>
</reference>
<organism>
    <name type="scientific">Wolbachia sp. subsp. Drosophila simulans (strain wRi)</name>
    <dbReference type="NCBI Taxonomy" id="66084"/>
    <lineage>
        <taxon>Bacteria</taxon>
        <taxon>Pseudomonadati</taxon>
        <taxon>Pseudomonadota</taxon>
        <taxon>Alphaproteobacteria</taxon>
        <taxon>Rickettsiales</taxon>
        <taxon>Anaplasmataceae</taxon>
        <taxon>Wolbachieae</taxon>
        <taxon>Wolbachia</taxon>
    </lineage>
</organism>
<protein>
    <recommendedName>
        <fullName evidence="1">dCTP deaminase</fullName>
        <ecNumber evidence="1">3.5.4.13</ecNumber>
    </recommendedName>
    <alternativeName>
        <fullName evidence="1">Deoxycytidine triphosphate deaminase</fullName>
    </alternativeName>
</protein>
<name>DCD_WOLWR</name>
<gene>
    <name evidence="1" type="primary">dcd</name>
    <name type="ordered locus">WRi_004100</name>
</gene>